<organism>
    <name type="scientific">Claviceps paspali</name>
    <name type="common">Rye ergot fungus</name>
    <dbReference type="NCBI Taxonomy" id="40601"/>
    <lineage>
        <taxon>Eukaryota</taxon>
        <taxon>Fungi</taxon>
        <taxon>Dikarya</taxon>
        <taxon>Ascomycota</taxon>
        <taxon>Pezizomycotina</taxon>
        <taxon>Sordariomycetes</taxon>
        <taxon>Hypocreomycetidae</taxon>
        <taxon>Hypocreales</taxon>
        <taxon>Clavicipitaceae</taxon>
        <taxon>Claviceps</taxon>
    </lineage>
</organism>
<reference key="1">
    <citation type="journal article" date="2013" name="PLoS Genet.">
        <title>Plant-symbiotic fungi as chemical engineers: Multi-genome analysis of the Clavicipitaceae reveals dynamics of alkaloid loci.</title>
        <authorList>
            <person name="Schardl C.L."/>
            <person name="Young C.A."/>
            <person name="Hesse U."/>
            <person name="Amyotte S.G."/>
            <person name="Andreeva K."/>
            <person name="Calie P.J."/>
            <person name="Fleetwood D.J."/>
            <person name="Haws D.C."/>
            <person name="Moore N."/>
            <person name="Oeser B."/>
            <person name="Panaccione D.G."/>
            <person name="Schweri K.K."/>
            <person name="Voisey C.R."/>
            <person name="Farman M.L."/>
            <person name="Jaromczyk J.W."/>
            <person name="Roe B.A."/>
            <person name="O'Sullivan D.M."/>
            <person name="Scott B."/>
            <person name="Tudzynski P."/>
            <person name="An Z."/>
            <person name="Arnaoudova E.G."/>
            <person name="Bullock C.T."/>
            <person name="Charlton N.D."/>
            <person name="Chen L."/>
            <person name="Cox M."/>
            <person name="Dinkins R.D."/>
            <person name="Florea S."/>
            <person name="Glenn A.E."/>
            <person name="Gordon A."/>
            <person name="Gueldener U."/>
            <person name="Harris D.R."/>
            <person name="Hollin W."/>
            <person name="Jaromczyk J."/>
            <person name="Johnson R.D."/>
            <person name="Khan A.K."/>
            <person name="Leistner E."/>
            <person name="Leuchtmann A."/>
            <person name="Li C."/>
            <person name="Liu J."/>
            <person name="Liu J."/>
            <person name="Liu M."/>
            <person name="Mace W."/>
            <person name="Machado C."/>
            <person name="Nagabhyru P."/>
            <person name="Pan J."/>
            <person name="Schmid J."/>
            <person name="Sugawara K."/>
            <person name="Steiner U."/>
            <person name="Takach J.E."/>
            <person name="Tanaka E."/>
            <person name="Webb J.S."/>
            <person name="Wilson E.V."/>
            <person name="Wiseman J.L."/>
            <person name="Yoshida R."/>
            <person name="Zeng Z."/>
        </authorList>
    </citation>
    <scope>NUCLEOTIDE SEQUENCE [GENOMIC DNA]</scope>
    <scope>IDENTIFICATION</scope>
    <scope>FUNCTION</scope>
    <source>
        <strain>RRC-1481</strain>
    </source>
</reference>
<reference key="2">
    <citation type="journal article" date="2018" name="Appl. Microbiol. Biotechnol.">
        <title>Inactivation of the indole-diterpene biosynthetic gene cluster of Claviceps paspali by Agrobacterium-mediated gene replacement.</title>
        <authorList>
            <person name="Kozak L."/>
            <person name="Szilagyi Z."/>
            <person name="Vago B."/>
            <person name="Kakuk A."/>
            <person name="Toth L."/>
            <person name="Molnar I."/>
            <person name="Pocsi I."/>
        </authorList>
    </citation>
    <scope>FUNCTION</scope>
    <scope>DISRUPTION PHENOTYPE</scope>
    <scope>PATHWAY</scope>
</reference>
<reference key="3">
    <citation type="journal article" date="2020" name="Folia Microbiol. (Praha)">
        <title>Functional characterization of the idtF and idtP genes in the Claviceps paspali indole diterpene biosynthetic gene cluster.</title>
        <authorList>
            <person name="Kozak L."/>
            <person name="Szilagyi Z."/>
            <person name="Toth L."/>
            <person name="Pocsi I."/>
            <person name="Molnar I."/>
        </authorList>
    </citation>
    <scope>FUNCTION</scope>
</reference>
<keyword id="KW-0325">Glycoprotein</keyword>
<keyword id="KW-0456">Lyase</keyword>
<keyword id="KW-0472">Membrane</keyword>
<keyword id="KW-0812">Transmembrane</keyword>
<keyword id="KW-1133">Transmembrane helix</keyword>
<gene>
    <name evidence="6" type="primary">idtB</name>
</gene>
<accession>J7FIJ6</accession>
<evidence type="ECO:0000255" key="1"/>
<evidence type="ECO:0000255" key="2">
    <source>
        <dbReference type="PROSITE-ProRule" id="PRU00498"/>
    </source>
</evidence>
<evidence type="ECO:0000269" key="3">
    <source>
    </source>
</evidence>
<evidence type="ECO:0000269" key="4">
    <source>
    </source>
</evidence>
<evidence type="ECO:0000269" key="5">
    <source>
    </source>
</evidence>
<evidence type="ECO:0000303" key="6">
    <source>
    </source>
</evidence>
<evidence type="ECO:0000305" key="7"/>
<evidence type="ECO:0000305" key="8">
    <source>
    </source>
</evidence>
<sequence length="239" mass="26633">MDGFSILHEPPAAYKEVKWMADTFVAGMGLGWIVNYALMIRFSWKGRPHCMALLPLCNNIAWELTYTIVYPSANRVELLVFAIGLTLNFFIMVGARRSARVEWRHSPLLSEHAGFILLVGTLLCFTGHVALAMEIGPGLAYSWGAVVCQLALSIGGLFQLLQRNSTAGTSWTLWSSRFLGSCCTVAFAGLRCKYWPEVFGWLASPLVLWSLVTFLLADSAYGFCLYRVSHAETKARKKH</sequence>
<name>IDTB_CLAPA</name>
<protein>
    <recommendedName>
        <fullName evidence="6">Terpene cyclase idtB</fullName>
        <ecNumber evidence="8">4.2.3.-</ecNumber>
    </recommendedName>
    <alternativeName>
        <fullName evidence="6">Indole-diterpene biosynthesis cluster protein B</fullName>
    </alternativeName>
</protein>
<feature type="chain" id="PRO_0000451432" description="Terpene cyclase idtB">
    <location>
        <begin position="1"/>
        <end position="239"/>
    </location>
</feature>
<feature type="transmembrane region" description="Helical" evidence="1">
    <location>
        <begin position="20"/>
        <end position="40"/>
    </location>
</feature>
<feature type="transmembrane region" description="Helical" evidence="1">
    <location>
        <begin position="50"/>
        <end position="70"/>
    </location>
</feature>
<feature type="transmembrane region" description="Helical" evidence="1">
    <location>
        <begin position="75"/>
        <end position="95"/>
    </location>
</feature>
<feature type="transmembrane region" description="Helical" evidence="1">
    <location>
        <begin position="113"/>
        <end position="133"/>
    </location>
</feature>
<feature type="transmembrane region" description="Helical" evidence="1">
    <location>
        <begin position="138"/>
        <end position="158"/>
    </location>
</feature>
<feature type="transmembrane region" description="Helical" evidence="1">
    <location>
        <begin position="197"/>
        <end position="217"/>
    </location>
</feature>
<feature type="glycosylation site" description="N-linked (GlcNAc...) asparagine" evidence="2">
    <location>
        <position position="164"/>
    </location>
</feature>
<proteinExistence type="inferred from homology"/>
<dbReference type="EC" id="4.2.3.-" evidence="8"/>
<dbReference type="EMBL" id="JN613321">
    <property type="protein sequence ID" value="AFO85421.1"/>
    <property type="molecule type" value="Genomic_DNA"/>
</dbReference>
<dbReference type="GlyCosmos" id="J7FIJ6">
    <property type="glycosylation" value="1 site, No reported glycans"/>
</dbReference>
<dbReference type="GO" id="GO:0016020">
    <property type="term" value="C:membrane"/>
    <property type="evidence" value="ECO:0007669"/>
    <property type="project" value="UniProtKB-SubCell"/>
</dbReference>
<dbReference type="GO" id="GO:0016829">
    <property type="term" value="F:lyase activity"/>
    <property type="evidence" value="ECO:0007669"/>
    <property type="project" value="UniProtKB-KW"/>
</dbReference>
<dbReference type="InterPro" id="IPR039020">
    <property type="entry name" value="PaxB-like"/>
</dbReference>
<dbReference type="PANTHER" id="PTHR42038">
    <property type="match status" value="1"/>
</dbReference>
<dbReference type="PANTHER" id="PTHR42038:SF2">
    <property type="entry name" value="TERPENE CYCLASE AUSL"/>
    <property type="match status" value="1"/>
</dbReference>
<dbReference type="Pfam" id="PF25129">
    <property type="entry name" value="Pyr4-TMTC"/>
    <property type="match status" value="1"/>
</dbReference>
<comment type="function">
    <text evidence="3 4 5 8">Terpene cyclase; part of the gene cluster that mediates the biosynthesis of paspalitrems, indole-diterpene (IDT) mycotoxins that are potent tremorgens in mammals (PubMed:23468653, PubMed:29457197, PubMed:32077051). The geranylgeranyl diphosphate (GGPP) synthase idtG is proposed to catalyze the first step in IDT biosynthesis via catalysis of a series of iterative condensations of isopentenyl diphosphate (IPP) with dimethylallyl diphosphate (DMAPP), geranyl diphosphate (GPP), and farnesyl diphosphate (FPP), to form GGPP (Probable). Condensation of indole-3-glycerol phosphate with GGPP by the prenyltransferase idtC then forms 3-geranylgeranylindole (3-GGI) (Probable). Epoxidation of the two terminal alkenes of the geranylgeranyl moiety by the FAD-dependent monooxygenase idtM, and cyclization by the terpene cyclase idtB then leads to the production of paspaline (Probable). The cytochrome P450 monooxygenase idtP then catalyzes oxidative elimination of the pendant methyl group at C-12 of paspaline and generates the C-10 ketone to yield 13-desoxypaxilline (PubMed:32077051). The cytochrome P450 monooxygenase idtQ may catalyze the C-13 oxidation of 13-desoxypaxilline to afford paxilline (Probable). Considering that both paspalicine and paxilline were detected in C.paspali, idtQ also catalyzes the formation of paspalinine from 13-desoxypaxilline via paspalicine as an intermediate (Probable). Finally, the alpha-prenyltransferase idtF prenylates paspalinine at the C-20 or the C-21 positions to yield paspalitrems A and C, respectively (PubMed:32077051). The hydroxylation of paspalitrem A at C-32 by a still unknown oxidase affords paspalitrem B (Probable).</text>
</comment>
<comment type="pathway">
    <text evidence="4">Secondary metabolite biosynthesis.</text>
</comment>
<comment type="subcellular location">
    <subcellularLocation>
        <location evidence="1">Membrane</location>
        <topology evidence="1">Multi-pass membrane protein</topology>
    </subcellularLocation>
</comment>
<comment type="disruption phenotype">
    <text evidence="4">Simultaneous disruption of idtB, idtC, idtF and idtG eliminates the biosynthesis of the whole spectrum of indole-diterpenes reported to be produced by C.paspali, including paspaline, paxilline, paspalinine, paspalitrem A and paspalitrem B.</text>
</comment>
<comment type="similarity">
    <text evidence="7">Belongs to the paxB family.</text>
</comment>